<comment type="similarity">
    <text evidence="1">Belongs to the UPF0297 family.</text>
</comment>
<proteinExistence type="inferred from homology"/>
<name>Y2079_STRMU</name>
<accession>Q8DRX7</accession>
<feature type="chain" id="PRO_0000216989" description="UPF0297 protein SMU_2079c">
    <location>
        <begin position="1"/>
        <end position="89"/>
    </location>
</feature>
<protein>
    <recommendedName>
        <fullName evidence="1">UPF0297 protein SMU_2079c</fullName>
    </recommendedName>
</protein>
<reference key="1">
    <citation type="journal article" date="2002" name="Proc. Natl. Acad. Sci. U.S.A.">
        <title>Genome sequence of Streptococcus mutans UA159, a cariogenic dental pathogen.</title>
        <authorList>
            <person name="Ajdic D.J."/>
            <person name="McShan W.M."/>
            <person name="McLaughlin R.E."/>
            <person name="Savic G."/>
            <person name="Chang J."/>
            <person name="Carson M.B."/>
            <person name="Primeaux C."/>
            <person name="Tian R."/>
            <person name="Kenton S."/>
            <person name="Jia H.G."/>
            <person name="Lin S.P."/>
            <person name="Qian Y."/>
            <person name="Li S."/>
            <person name="Zhu H."/>
            <person name="Najar F.Z."/>
            <person name="Lai H."/>
            <person name="White J."/>
            <person name="Roe B.A."/>
            <person name="Ferretti J.J."/>
        </authorList>
    </citation>
    <scope>NUCLEOTIDE SEQUENCE [LARGE SCALE GENOMIC DNA]</scope>
    <source>
        <strain>ATCC 700610 / UA159</strain>
    </source>
</reference>
<dbReference type="EMBL" id="AE014133">
    <property type="protein sequence ID" value="AAN59675.1"/>
    <property type="molecule type" value="Genomic_DNA"/>
</dbReference>
<dbReference type="RefSeq" id="NP_722369.1">
    <property type="nucleotide sequence ID" value="NC_004350.2"/>
</dbReference>
<dbReference type="RefSeq" id="WP_002262386.1">
    <property type="nucleotide sequence ID" value="NC_004350.2"/>
</dbReference>
<dbReference type="SMR" id="Q8DRX7"/>
<dbReference type="STRING" id="210007.SMU_2079c"/>
<dbReference type="KEGG" id="smu:SMU_2079c"/>
<dbReference type="PATRIC" id="fig|210007.7.peg.1851"/>
<dbReference type="eggNOG" id="COG4472">
    <property type="taxonomic scope" value="Bacteria"/>
</dbReference>
<dbReference type="HOGENOM" id="CLU_162466_0_0_9"/>
<dbReference type="OrthoDB" id="9796303at2"/>
<dbReference type="PhylomeDB" id="Q8DRX7"/>
<dbReference type="Proteomes" id="UP000002512">
    <property type="component" value="Chromosome"/>
</dbReference>
<dbReference type="HAMAP" id="MF_01507">
    <property type="entry name" value="UPF0297"/>
    <property type="match status" value="1"/>
</dbReference>
<dbReference type="InterPro" id="IPR009309">
    <property type="entry name" value="IreB"/>
</dbReference>
<dbReference type="NCBIfam" id="NF003997">
    <property type="entry name" value="PRK05473.1"/>
    <property type="match status" value="1"/>
</dbReference>
<dbReference type="PANTHER" id="PTHR40067">
    <property type="entry name" value="UPF0297 PROTEIN YRZL"/>
    <property type="match status" value="1"/>
</dbReference>
<dbReference type="PANTHER" id="PTHR40067:SF1">
    <property type="entry name" value="UPF0297 PROTEIN YRZL"/>
    <property type="match status" value="1"/>
</dbReference>
<dbReference type="Pfam" id="PF06135">
    <property type="entry name" value="IreB"/>
    <property type="match status" value="1"/>
</dbReference>
<dbReference type="PIRSF" id="PIRSF037258">
    <property type="entry name" value="DUF965_bac"/>
    <property type="match status" value="1"/>
</dbReference>
<gene>
    <name type="ordered locus">SMU_2079c</name>
</gene>
<sequence>MGFTDETVRFNLDDGNKKEISETLTHVYRSLEEKGYNPINQIVGYVLSGDPAYVPRYNDARNQIRKYERDEIVEELVRYYLQGNGIDLK</sequence>
<keyword id="KW-1185">Reference proteome</keyword>
<evidence type="ECO:0000255" key="1">
    <source>
        <dbReference type="HAMAP-Rule" id="MF_01507"/>
    </source>
</evidence>
<organism>
    <name type="scientific">Streptococcus mutans serotype c (strain ATCC 700610 / UA159)</name>
    <dbReference type="NCBI Taxonomy" id="210007"/>
    <lineage>
        <taxon>Bacteria</taxon>
        <taxon>Bacillati</taxon>
        <taxon>Bacillota</taxon>
        <taxon>Bacilli</taxon>
        <taxon>Lactobacillales</taxon>
        <taxon>Streptococcaceae</taxon>
        <taxon>Streptococcus</taxon>
    </lineage>
</organism>